<comment type="function">
    <text evidence="1">Represses a number of genes involved in the response to DNA damage (SOS response), including recA and lexA. In the presence of single-stranded DNA, RecA interacts with LexA causing an autocatalytic cleavage which disrupts the DNA-binding part of LexA, leading to derepression of the SOS regulon and eventually DNA repair.</text>
</comment>
<comment type="catalytic activity">
    <reaction evidence="1">
        <text>Hydrolysis of Ala-|-Gly bond in repressor LexA.</text>
        <dbReference type="EC" id="3.4.21.88"/>
    </reaction>
</comment>
<comment type="subunit">
    <text evidence="1">Homodimer.</text>
</comment>
<comment type="similarity">
    <text evidence="1">Belongs to the peptidase S24 family.</text>
</comment>
<sequence length="206" mass="22850">MKKMSARQQQILDFIKDEVRAKGYPPSVREIGEAVGLASSSTVHGHLDRLEKRGLIRRDKTKPRAIEILTDDMPTMEEQESVMYVPVIGKVTAGTPITAIENVEEHFPLPAHIVGSDNVYMLSVSGDSMINAGILDGDRVLVRQQSTADNGEIVVAMTEEGEATVKRIYKEASKVRLQPENDELEAMYFDNVSILGKVIGVYRTIH</sequence>
<accession>C4L2T2</accession>
<name>LEXA_EXISA</name>
<protein>
    <recommendedName>
        <fullName evidence="1">LexA repressor</fullName>
        <ecNumber evidence="1">3.4.21.88</ecNumber>
    </recommendedName>
</protein>
<gene>
    <name evidence="1" type="primary">lexA</name>
    <name type="ordered locus">EAT1b_0408</name>
</gene>
<keyword id="KW-0068">Autocatalytic cleavage</keyword>
<keyword id="KW-0227">DNA damage</keyword>
<keyword id="KW-0234">DNA repair</keyword>
<keyword id="KW-0235">DNA replication</keyword>
<keyword id="KW-0238">DNA-binding</keyword>
<keyword id="KW-0378">Hydrolase</keyword>
<keyword id="KW-0678">Repressor</keyword>
<keyword id="KW-0742">SOS response</keyword>
<keyword id="KW-0804">Transcription</keyword>
<keyword id="KW-0805">Transcription regulation</keyword>
<feature type="chain" id="PRO_1000201821" description="LexA repressor">
    <location>
        <begin position="1"/>
        <end position="206"/>
    </location>
</feature>
<feature type="DNA-binding region" description="H-T-H motif" evidence="1">
    <location>
        <begin position="28"/>
        <end position="48"/>
    </location>
</feature>
<feature type="active site" description="For autocatalytic cleavage activity" evidence="1">
    <location>
        <position position="128"/>
    </location>
</feature>
<feature type="active site" description="For autocatalytic cleavage activity" evidence="1">
    <location>
        <position position="166"/>
    </location>
</feature>
<feature type="site" description="Cleavage; by autolysis" evidence="1">
    <location>
        <begin position="93"/>
        <end position="94"/>
    </location>
</feature>
<evidence type="ECO:0000255" key="1">
    <source>
        <dbReference type="HAMAP-Rule" id="MF_00015"/>
    </source>
</evidence>
<proteinExistence type="inferred from homology"/>
<reference key="1">
    <citation type="journal article" date="2011" name="J. Bacteriol.">
        <title>Complete genome sequence of the Thermophilic Bacterium Exiguobacterium sp. AT1b.</title>
        <authorList>
            <person name="Vishnivetskaya T.A."/>
            <person name="Lucas S."/>
            <person name="Copeland A."/>
            <person name="Lapidus A."/>
            <person name="Glavina del Rio T."/>
            <person name="Dalin E."/>
            <person name="Tice H."/>
            <person name="Bruce D.C."/>
            <person name="Goodwin L.A."/>
            <person name="Pitluck S."/>
            <person name="Saunders E."/>
            <person name="Brettin T."/>
            <person name="Detter C."/>
            <person name="Han C."/>
            <person name="Larimer F."/>
            <person name="Land M.L."/>
            <person name="Hauser L.J."/>
            <person name="Kyrpides N.C."/>
            <person name="Ovchinnikova G."/>
            <person name="Kathariou S."/>
            <person name="Ramaley R.F."/>
            <person name="Rodrigues D.F."/>
            <person name="Hendrix C."/>
            <person name="Richardson P."/>
            <person name="Tiedje J.M."/>
        </authorList>
    </citation>
    <scope>NUCLEOTIDE SEQUENCE [LARGE SCALE GENOMIC DNA]</scope>
    <source>
        <strain>ATCC BAA-1283 / AT1b</strain>
    </source>
</reference>
<dbReference type="EC" id="3.4.21.88" evidence="1"/>
<dbReference type="EMBL" id="CP001615">
    <property type="protein sequence ID" value="ACQ69340.1"/>
    <property type="molecule type" value="Genomic_DNA"/>
</dbReference>
<dbReference type="RefSeq" id="WP_012726459.1">
    <property type="nucleotide sequence ID" value="NC_012673.1"/>
</dbReference>
<dbReference type="SMR" id="C4L2T2"/>
<dbReference type="STRING" id="360911.EAT1b_0408"/>
<dbReference type="KEGG" id="eat:EAT1b_0408"/>
<dbReference type="eggNOG" id="COG1974">
    <property type="taxonomic scope" value="Bacteria"/>
</dbReference>
<dbReference type="HOGENOM" id="CLU_066192_45_1_9"/>
<dbReference type="OrthoDB" id="9802364at2"/>
<dbReference type="Proteomes" id="UP000000716">
    <property type="component" value="Chromosome"/>
</dbReference>
<dbReference type="GO" id="GO:0003677">
    <property type="term" value="F:DNA binding"/>
    <property type="evidence" value="ECO:0007669"/>
    <property type="project" value="UniProtKB-UniRule"/>
</dbReference>
<dbReference type="GO" id="GO:0004252">
    <property type="term" value="F:serine-type endopeptidase activity"/>
    <property type="evidence" value="ECO:0007669"/>
    <property type="project" value="UniProtKB-UniRule"/>
</dbReference>
<dbReference type="GO" id="GO:0006281">
    <property type="term" value="P:DNA repair"/>
    <property type="evidence" value="ECO:0007669"/>
    <property type="project" value="UniProtKB-UniRule"/>
</dbReference>
<dbReference type="GO" id="GO:0006260">
    <property type="term" value="P:DNA replication"/>
    <property type="evidence" value="ECO:0007669"/>
    <property type="project" value="UniProtKB-UniRule"/>
</dbReference>
<dbReference type="GO" id="GO:0045892">
    <property type="term" value="P:negative regulation of DNA-templated transcription"/>
    <property type="evidence" value="ECO:0007669"/>
    <property type="project" value="UniProtKB-UniRule"/>
</dbReference>
<dbReference type="GO" id="GO:0006508">
    <property type="term" value="P:proteolysis"/>
    <property type="evidence" value="ECO:0007669"/>
    <property type="project" value="InterPro"/>
</dbReference>
<dbReference type="GO" id="GO:0009432">
    <property type="term" value="P:SOS response"/>
    <property type="evidence" value="ECO:0007669"/>
    <property type="project" value="UniProtKB-UniRule"/>
</dbReference>
<dbReference type="CDD" id="cd00090">
    <property type="entry name" value="HTH_ARSR"/>
    <property type="match status" value="1"/>
</dbReference>
<dbReference type="CDD" id="cd06529">
    <property type="entry name" value="S24_LexA-like"/>
    <property type="match status" value="1"/>
</dbReference>
<dbReference type="FunFam" id="1.10.10.10:FF:000009">
    <property type="entry name" value="LexA repressor"/>
    <property type="match status" value="1"/>
</dbReference>
<dbReference type="FunFam" id="2.10.109.10:FF:000001">
    <property type="entry name" value="LexA repressor"/>
    <property type="match status" value="1"/>
</dbReference>
<dbReference type="Gene3D" id="2.10.109.10">
    <property type="entry name" value="Umud Fragment, subunit A"/>
    <property type="match status" value="1"/>
</dbReference>
<dbReference type="Gene3D" id="1.10.10.10">
    <property type="entry name" value="Winged helix-like DNA-binding domain superfamily/Winged helix DNA-binding domain"/>
    <property type="match status" value="1"/>
</dbReference>
<dbReference type="HAMAP" id="MF_00015">
    <property type="entry name" value="LexA"/>
    <property type="match status" value="1"/>
</dbReference>
<dbReference type="InterPro" id="IPR011991">
    <property type="entry name" value="ArsR-like_HTH"/>
</dbReference>
<dbReference type="InterPro" id="IPR006200">
    <property type="entry name" value="LexA"/>
</dbReference>
<dbReference type="InterPro" id="IPR039418">
    <property type="entry name" value="LexA-like"/>
</dbReference>
<dbReference type="InterPro" id="IPR036286">
    <property type="entry name" value="LexA/Signal_pep-like_sf"/>
</dbReference>
<dbReference type="InterPro" id="IPR006199">
    <property type="entry name" value="LexA_DNA-bd_dom"/>
</dbReference>
<dbReference type="InterPro" id="IPR050077">
    <property type="entry name" value="LexA_repressor"/>
</dbReference>
<dbReference type="InterPro" id="IPR006197">
    <property type="entry name" value="Peptidase_S24_LexA"/>
</dbReference>
<dbReference type="InterPro" id="IPR015927">
    <property type="entry name" value="Peptidase_S24_S26A/B/C"/>
</dbReference>
<dbReference type="InterPro" id="IPR036388">
    <property type="entry name" value="WH-like_DNA-bd_sf"/>
</dbReference>
<dbReference type="InterPro" id="IPR036390">
    <property type="entry name" value="WH_DNA-bd_sf"/>
</dbReference>
<dbReference type="NCBIfam" id="TIGR00498">
    <property type="entry name" value="lexA"/>
    <property type="match status" value="1"/>
</dbReference>
<dbReference type="PANTHER" id="PTHR33516">
    <property type="entry name" value="LEXA REPRESSOR"/>
    <property type="match status" value="1"/>
</dbReference>
<dbReference type="PANTHER" id="PTHR33516:SF2">
    <property type="entry name" value="LEXA REPRESSOR-RELATED"/>
    <property type="match status" value="1"/>
</dbReference>
<dbReference type="Pfam" id="PF01726">
    <property type="entry name" value="LexA_DNA_bind"/>
    <property type="match status" value="1"/>
</dbReference>
<dbReference type="Pfam" id="PF00717">
    <property type="entry name" value="Peptidase_S24"/>
    <property type="match status" value="1"/>
</dbReference>
<dbReference type="PRINTS" id="PR00726">
    <property type="entry name" value="LEXASERPTASE"/>
</dbReference>
<dbReference type="SUPFAM" id="SSF51306">
    <property type="entry name" value="LexA/Signal peptidase"/>
    <property type="match status" value="1"/>
</dbReference>
<dbReference type="SUPFAM" id="SSF46785">
    <property type="entry name" value="Winged helix' DNA-binding domain"/>
    <property type="match status" value="1"/>
</dbReference>
<organism>
    <name type="scientific">Exiguobacterium sp. (strain ATCC BAA-1283 / AT1b)</name>
    <dbReference type="NCBI Taxonomy" id="360911"/>
    <lineage>
        <taxon>Bacteria</taxon>
        <taxon>Bacillati</taxon>
        <taxon>Bacillota</taxon>
        <taxon>Bacilli</taxon>
        <taxon>Bacillales</taxon>
        <taxon>Bacillales Family XII. Incertae Sedis</taxon>
        <taxon>Exiguobacterium</taxon>
    </lineage>
</organism>